<reference key="1">
    <citation type="journal article" date="2007" name="Photosyn. Res.">
        <title>Complete nucleotide sequence of the freshwater unicellular cyanobacterium Synechococcus elongatus PCC 6301 chromosome: gene content and organization.</title>
        <authorList>
            <person name="Sugita C."/>
            <person name="Ogata K."/>
            <person name="Shikata M."/>
            <person name="Jikuya H."/>
            <person name="Takano J."/>
            <person name="Furumichi M."/>
            <person name="Kanehisa M."/>
            <person name="Omata T."/>
            <person name="Sugiura M."/>
            <person name="Sugita M."/>
        </authorList>
    </citation>
    <scope>NUCLEOTIDE SEQUENCE [LARGE SCALE GENOMIC DNA]</scope>
    <source>
        <strain>ATCC 27144 / PCC 6301 / SAUG 1402/1</strain>
    </source>
</reference>
<feature type="chain" id="PRO_0000122875" description="Protein RecA">
    <location>
        <begin position="1"/>
        <end position="356"/>
    </location>
</feature>
<feature type="binding site" evidence="1">
    <location>
        <begin position="71"/>
        <end position="78"/>
    </location>
    <ligand>
        <name>ATP</name>
        <dbReference type="ChEBI" id="CHEBI:30616"/>
    </ligand>
</feature>
<keyword id="KW-0067">ATP-binding</keyword>
<keyword id="KW-0963">Cytoplasm</keyword>
<keyword id="KW-0227">DNA damage</keyword>
<keyword id="KW-0233">DNA recombination</keyword>
<keyword id="KW-0234">DNA repair</keyword>
<keyword id="KW-0238">DNA-binding</keyword>
<keyword id="KW-0547">Nucleotide-binding</keyword>
<keyword id="KW-0742">SOS response</keyword>
<protein>
    <recommendedName>
        <fullName evidence="1">Protein RecA</fullName>
    </recommendedName>
    <alternativeName>
        <fullName evidence="1">Recombinase A</fullName>
    </alternativeName>
</protein>
<dbReference type="EMBL" id="AP008231">
    <property type="protein sequence ID" value="BAD79355.1"/>
    <property type="molecule type" value="Genomic_DNA"/>
</dbReference>
<dbReference type="RefSeq" id="WP_011243477.1">
    <property type="nucleotide sequence ID" value="NZ_CP085785.1"/>
</dbReference>
<dbReference type="SMR" id="Q5N2W5"/>
<dbReference type="GeneID" id="72429165"/>
<dbReference type="KEGG" id="syc:syc1165_d"/>
<dbReference type="eggNOG" id="COG0468">
    <property type="taxonomic scope" value="Bacteria"/>
</dbReference>
<dbReference type="Proteomes" id="UP000001175">
    <property type="component" value="Chromosome"/>
</dbReference>
<dbReference type="GO" id="GO:0005829">
    <property type="term" value="C:cytosol"/>
    <property type="evidence" value="ECO:0007669"/>
    <property type="project" value="TreeGrafter"/>
</dbReference>
<dbReference type="GO" id="GO:0005524">
    <property type="term" value="F:ATP binding"/>
    <property type="evidence" value="ECO:0007669"/>
    <property type="project" value="UniProtKB-UniRule"/>
</dbReference>
<dbReference type="GO" id="GO:0016887">
    <property type="term" value="F:ATP hydrolysis activity"/>
    <property type="evidence" value="ECO:0007669"/>
    <property type="project" value="InterPro"/>
</dbReference>
<dbReference type="GO" id="GO:0140664">
    <property type="term" value="F:ATP-dependent DNA damage sensor activity"/>
    <property type="evidence" value="ECO:0007669"/>
    <property type="project" value="InterPro"/>
</dbReference>
<dbReference type="GO" id="GO:0003684">
    <property type="term" value="F:damaged DNA binding"/>
    <property type="evidence" value="ECO:0007669"/>
    <property type="project" value="UniProtKB-UniRule"/>
</dbReference>
<dbReference type="GO" id="GO:0003697">
    <property type="term" value="F:single-stranded DNA binding"/>
    <property type="evidence" value="ECO:0007669"/>
    <property type="project" value="UniProtKB-UniRule"/>
</dbReference>
<dbReference type="GO" id="GO:0006310">
    <property type="term" value="P:DNA recombination"/>
    <property type="evidence" value="ECO:0007669"/>
    <property type="project" value="UniProtKB-UniRule"/>
</dbReference>
<dbReference type="GO" id="GO:0006281">
    <property type="term" value="P:DNA repair"/>
    <property type="evidence" value="ECO:0007669"/>
    <property type="project" value="UniProtKB-UniRule"/>
</dbReference>
<dbReference type="GO" id="GO:0009432">
    <property type="term" value="P:SOS response"/>
    <property type="evidence" value="ECO:0007669"/>
    <property type="project" value="UniProtKB-UniRule"/>
</dbReference>
<dbReference type="CDD" id="cd00983">
    <property type="entry name" value="RecA"/>
    <property type="match status" value="1"/>
</dbReference>
<dbReference type="FunFam" id="3.40.50.300:FF:000087">
    <property type="entry name" value="Recombinase RecA"/>
    <property type="match status" value="1"/>
</dbReference>
<dbReference type="Gene3D" id="3.40.50.300">
    <property type="entry name" value="P-loop containing nucleotide triphosphate hydrolases"/>
    <property type="match status" value="1"/>
</dbReference>
<dbReference type="HAMAP" id="MF_00268">
    <property type="entry name" value="RecA"/>
    <property type="match status" value="1"/>
</dbReference>
<dbReference type="InterPro" id="IPR003593">
    <property type="entry name" value="AAA+_ATPase"/>
</dbReference>
<dbReference type="InterPro" id="IPR013765">
    <property type="entry name" value="DNA_recomb/repair_RecA"/>
</dbReference>
<dbReference type="InterPro" id="IPR020584">
    <property type="entry name" value="DNA_recomb/repair_RecA_CS"/>
</dbReference>
<dbReference type="InterPro" id="IPR027417">
    <property type="entry name" value="P-loop_NTPase"/>
</dbReference>
<dbReference type="InterPro" id="IPR049261">
    <property type="entry name" value="RecA-like_C"/>
</dbReference>
<dbReference type="InterPro" id="IPR049428">
    <property type="entry name" value="RecA-like_N"/>
</dbReference>
<dbReference type="InterPro" id="IPR020588">
    <property type="entry name" value="RecA_ATP-bd"/>
</dbReference>
<dbReference type="InterPro" id="IPR023400">
    <property type="entry name" value="RecA_C_sf"/>
</dbReference>
<dbReference type="InterPro" id="IPR020587">
    <property type="entry name" value="RecA_monomer-monomer_interface"/>
</dbReference>
<dbReference type="NCBIfam" id="TIGR02012">
    <property type="entry name" value="tigrfam_recA"/>
    <property type="match status" value="1"/>
</dbReference>
<dbReference type="PANTHER" id="PTHR45900:SF1">
    <property type="entry name" value="MITOCHONDRIAL DNA REPAIR PROTEIN RECA HOMOLOG-RELATED"/>
    <property type="match status" value="1"/>
</dbReference>
<dbReference type="PANTHER" id="PTHR45900">
    <property type="entry name" value="RECA"/>
    <property type="match status" value="1"/>
</dbReference>
<dbReference type="Pfam" id="PF00154">
    <property type="entry name" value="RecA"/>
    <property type="match status" value="1"/>
</dbReference>
<dbReference type="Pfam" id="PF21096">
    <property type="entry name" value="RecA_C"/>
    <property type="match status" value="1"/>
</dbReference>
<dbReference type="PRINTS" id="PR00142">
    <property type="entry name" value="RECA"/>
</dbReference>
<dbReference type="SMART" id="SM00382">
    <property type="entry name" value="AAA"/>
    <property type="match status" value="1"/>
</dbReference>
<dbReference type="SUPFAM" id="SSF52540">
    <property type="entry name" value="P-loop containing nucleoside triphosphate hydrolases"/>
    <property type="match status" value="1"/>
</dbReference>
<dbReference type="SUPFAM" id="SSF54752">
    <property type="entry name" value="RecA protein, C-terminal domain"/>
    <property type="match status" value="1"/>
</dbReference>
<dbReference type="PROSITE" id="PS00321">
    <property type="entry name" value="RECA_1"/>
    <property type="match status" value="1"/>
</dbReference>
<dbReference type="PROSITE" id="PS50162">
    <property type="entry name" value="RECA_2"/>
    <property type="match status" value="1"/>
</dbReference>
<dbReference type="PROSITE" id="PS50163">
    <property type="entry name" value="RECA_3"/>
    <property type="match status" value="1"/>
</dbReference>
<organism>
    <name type="scientific">Synechococcus sp. (strain ATCC 27144 / PCC 6301 / SAUG 1402/1)</name>
    <name type="common">Anacystis nidulans</name>
    <dbReference type="NCBI Taxonomy" id="269084"/>
    <lineage>
        <taxon>Bacteria</taxon>
        <taxon>Bacillati</taxon>
        <taxon>Cyanobacteriota</taxon>
        <taxon>Cyanophyceae</taxon>
        <taxon>Synechococcales</taxon>
        <taxon>Synechococcaceae</taxon>
        <taxon>Synechococcus</taxon>
    </lineage>
</organism>
<accession>Q5N2W5</accession>
<name>RECA_SYNP6</name>
<proteinExistence type="inferred from homology"/>
<gene>
    <name evidence="1" type="primary">recA</name>
    <name type="ordered locus">syc1165_d</name>
</gene>
<evidence type="ECO:0000255" key="1">
    <source>
        <dbReference type="HAMAP-Rule" id="MF_00268"/>
    </source>
</evidence>
<sequence>MASKSDAIAPEKEKALNLVLSQIERNFGKGAIMRLGDAARLRVETISTGALTLDLALGGGLPKGRIIEVYGPESSGKTTLTLHAIAEVQKQGGIAAFVDAEHALDPVYATSVGVDIDNLLISQPDTGEMALEIVDQLVRSAAVDIVVIDSVAALVPRAEIEGEMGDAQVGLQARLMSQAMRKITGNIGKSGCTVIFLNQLRQKIGVTYGSPETTTGGQALKFYASVRLDIRRIQTLKKGTEEYGTRAKVKVVKNKVAPPFRIAEFDILFGKGISTLGCLVDLAEETGVILRKGAWYSYNGDNIGQGRDNTITHLEEHPDFRATVEQQVREKLALGAQVSANTVGAAPAKTAEDTDS</sequence>
<comment type="function">
    <text evidence="1">Can catalyze the hydrolysis of ATP in the presence of single-stranded DNA, the ATP-dependent uptake of single-stranded DNA by duplex DNA, and the ATP-dependent hybridization of homologous single-stranded DNAs. It interacts with LexA causing its activation and leading to its autocatalytic cleavage.</text>
</comment>
<comment type="subcellular location">
    <subcellularLocation>
        <location evidence="1">Cytoplasm</location>
    </subcellularLocation>
</comment>
<comment type="similarity">
    <text evidence="1">Belongs to the RecA family.</text>
</comment>